<dbReference type="EMBL" id="CP001600">
    <property type="protein sequence ID" value="ACR67419.1"/>
    <property type="molecule type" value="Genomic_DNA"/>
</dbReference>
<dbReference type="RefSeq" id="WP_012847052.1">
    <property type="nucleotide sequence ID" value="NZ_CP169062.1"/>
</dbReference>
<dbReference type="SMR" id="C5BHE1"/>
<dbReference type="STRING" id="67780.B6E78_12015"/>
<dbReference type="GeneID" id="72527075"/>
<dbReference type="KEGG" id="eic:NT01EI_0171"/>
<dbReference type="HOGENOM" id="CLU_062853_0_0_6"/>
<dbReference type="OrthoDB" id="9803740at2"/>
<dbReference type="Proteomes" id="UP000001485">
    <property type="component" value="Chromosome"/>
</dbReference>
<dbReference type="GO" id="GO:0022625">
    <property type="term" value="C:cytosolic large ribosomal subunit"/>
    <property type="evidence" value="ECO:0007669"/>
    <property type="project" value="TreeGrafter"/>
</dbReference>
<dbReference type="GO" id="GO:0019843">
    <property type="term" value="F:rRNA binding"/>
    <property type="evidence" value="ECO:0007669"/>
    <property type="project" value="UniProtKB-UniRule"/>
</dbReference>
<dbReference type="GO" id="GO:0003735">
    <property type="term" value="F:structural constituent of ribosome"/>
    <property type="evidence" value="ECO:0007669"/>
    <property type="project" value="InterPro"/>
</dbReference>
<dbReference type="GO" id="GO:0000049">
    <property type="term" value="F:tRNA binding"/>
    <property type="evidence" value="ECO:0007669"/>
    <property type="project" value="UniProtKB-KW"/>
</dbReference>
<dbReference type="GO" id="GO:0006417">
    <property type="term" value="P:regulation of translation"/>
    <property type="evidence" value="ECO:0007669"/>
    <property type="project" value="UniProtKB-KW"/>
</dbReference>
<dbReference type="GO" id="GO:0006412">
    <property type="term" value="P:translation"/>
    <property type="evidence" value="ECO:0007669"/>
    <property type="project" value="UniProtKB-UniRule"/>
</dbReference>
<dbReference type="CDD" id="cd00403">
    <property type="entry name" value="Ribosomal_L1"/>
    <property type="match status" value="1"/>
</dbReference>
<dbReference type="FunFam" id="3.40.50.790:FF:000001">
    <property type="entry name" value="50S ribosomal protein L1"/>
    <property type="match status" value="1"/>
</dbReference>
<dbReference type="Gene3D" id="3.30.190.20">
    <property type="match status" value="1"/>
</dbReference>
<dbReference type="Gene3D" id="3.40.50.790">
    <property type="match status" value="1"/>
</dbReference>
<dbReference type="HAMAP" id="MF_01318_B">
    <property type="entry name" value="Ribosomal_uL1_B"/>
    <property type="match status" value="1"/>
</dbReference>
<dbReference type="InterPro" id="IPR005878">
    <property type="entry name" value="Ribosom_uL1_bac-type"/>
</dbReference>
<dbReference type="InterPro" id="IPR002143">
    <property type="entry name" value="Ribosomal_uL1"/>
</dbReference>
<dbReference type="InterPro" id="IPR023674">
    <property type="entry name" value="Ribosomal_uL1-like"/>
</dbReference>
<dbReference type="InterPro" id="IPR028364">
    <property type="entry name" value="Ribosomal_uL1/biogenesis"/>
</dbReference>
<dbReference type="InterPro" id="IPR016095">
    <property type="entry name" value="Ribosomal_uL1_3-a/b-sand"/>
</dbReference>
<dbReference type="InterPro" id="IPR023673">
    <property type="entry name" value="Ribosomal_uL1_CS"/>
</dbReference>
<dbReference type="NCBIfam" id="TIGR01169">
    <property type="entry name" value="rplA_bact"/>
    <property type="match status" value="1"/>
</dbReference>
<dbReference type="PANTHER" id="PTHR36427">
    <property type="entry name" value="54S RIBOSOMAL PROTEIN L1, MITOCHONDRIAL"/>
    <property type="match status" value="1"/>
</dbReference>
<dbReference type="PANTHER" id="PTHR36427:SF3">
    <property type="entry name" value="LARGE RIBOSOMAL SUBUNIT PROTEIN UL1M"/>
    <property type="match status" value="1"/>
</dbReference>
<dbReference type="Pfam" id="PF00687">
    <property type="entry name" value="Ribosomal_L1"/>
    <property type="match status" value="1"/>
</dbReference>
<dbReference type="PIRSF" id="PIRSF002155">
    <property type="entry name" value="Ribosomal_L1"/>
    <property type="match status" value="1"/>
</dbReference>
<dbReference type="SUPFAM" id="SSF56808">
    <property type="entry name" value="Ribosomal protein L1"/>
    <property type="match status" value="1"/>
</dbReference>
<dbReference type="PROSITE" id="PS01199">
    <property type="entry name" value="RIBOSOMAL_L1"/>
    <property type="match status" value="1"/>
</dbReference>
<feature type="chain" id="PRO_1000214420" description="Large ribosomal subunit protein uL1">
    <location>
        <begin position="1"/>
        <end position="234"/>
    </location>
</feature>
<gene>
    <name evidence="1" type="primary">rplA</name>
    <name type="ordered locus">NT01EI_0171</name>
</gene>
<sequence length="234" mass="24721">MAKLTKRMRVIREKVDATKQYDINEAVALLQELATAKFVESVDVAVNLGIDARKSDQNVRGATVLPHGTGRTVRVAVFTQGPNAEAAKAAGADLVGMEDLADQIKKGEMNFDVVIASPDAMRVVGQLGQILGPRGLMPNPKVGTVTPNVAEAVKNAKAGQVRYRNDKNGIIHSTIGKASFSAEQLKENLEALMVALKKAKPATAKGVYIKKVCLSTTMGAGVTIDQATLSAVAN</sequence>
<accession>C5BHE1</accession>
<name>RL1_EDWI9</name>
<keyword id="KW-0678">Repressor</keyword>
<keyword id="KW-0687">Ribonucleoprotein</keyword>
<keyword id="KW-0689">Ribosomal protein</keyword>
<keyword id="KW-0694">RNA-binding</keyword>
<keyword id="KW-0699">rRNA-binding</keyword>
<keyword id="KW-0810">Translation regulation</keyword>
<keyword id="KW-0820">tRNA-binding</keyword>
<organism>
    <name type="scientific">Edwardsiella ictaluri (strain 93-146)</name>
    <dbReference type="NCBI Taxonomy" id="634503"/>
    <lineage>
        <taxon>Bacteria</taxon>
        <taxon>Pseudomonadati</taxon>
        <taxon>Pseudomonadota</taxon>
        <taxon>Gammaproteobacteria</taxon>
        <taxon>Enterobacterales</taxon>
        <taxon>Hafniaceae</taxon>
        <taxon>Edwardsiella</taxon>
    </lineage>
</organism>
<evidence type="ECO:0000255" key="1">
    <source>
        <dbReference type="HAMAP-Rule" id="MF_01318"/>
    </source>
</evidence>
<evidence type="ECO:0000305" key="2"/>
<reference key="1">
    <citation type="submission" date="2009-03" db="EMBL/GenBank/DDBJ databases">
        <title>Complete genome sequence of Edwardsiella ictaluri 93-146.</title>
        <authorList>
            <person name="Williams M.L."/>
            <person name="Gillaspy A.F."/>
            <person name="Dyer D.W."/>
            <person name="Thune R.L."/>
            <person name="Waldbieser G.C."/>
            <person name="Schuster S.C."/>
            <person name="Gipson J."/>
            <person name="Zaitshik J."/>
            <person name="Landry C."/>
            <person name="Lawrence M.L."/>
        </authorList>
    </citation>
    <scope>NUCLEOTIDE SEQUENCE [LARGE SCALE GENOMIC DNA]</scope>
    <source>
        <strain>93-146</strain>
    </source>
</reference>
<comment type="function">
    <text evidence="1">Binds directly to 23S rRNA. The L1 stalk is quite mobile in the ribosome, and is involved in E site tRNA release.</text>
</comment>
<comment type="function">
    <text evidence="1">Protein L1 is also a translational repressor protein, it controls the translation of the L11 operon by binding to its mRNA.</text>
</comment>
<comment type="subunit">
    <text evidence="1">Part of the 50S ribosomal subunit.</text>
</comment>
<comment type="similarity">
    <text evidence="1">Belongs to the universal ribosomal protein uL1 family.</text>
</comment>
<proteinExistence type="inferred from homology"/>
<protein>
    <recommendedName>
        <fullName evidence="1">Large ribosomal subunit protein uL1</fullName>
    </recommendedName>
    <alternativeName>
        <fullName evidence="2">50S ribosomal protein L1</fullName>
    </alternativeName>
</protein>